<sequence length="217" mass="23082">MKILVTGFDPFGGEKINPALETIKLLPNEILGAKIIKLEIPTVIGKSVAKIKDMIEKENPDVVLSIGQAGNRADISVERIGINIDDCRIPDNEGNQPIDEPVVKDGPAAYFVTLPIKAIVEKVKAGKIPASISNTAGTFICNHVCYGVAHIAAARTAQGKPMKSGFIHIPFLPEQVIGKPALTPSMSLEMIVKGIELAIEAIVQNNSDIKVSGGKIC</sequence>
<proteinExistence type="inferred from homology"/>
<reference key="1">
    <citation type="journal article" date="2004" name="Proc. Natl. Acad. Sci. U.S.A.">
        <title>Comparison of the genome of the oral pathogen Treponema denticola with other spirochete genomes.</title>
        <authorList>
            <person name="Seshadri R."/>
            <person name="Myers G.S.A."/>
            <person name="Tettelin H."/>
            <person name="Eisen J.A."/>
            <person name="Heidelberg J.F."/>
            <person name="Dodson R.J."/>
            <person name="Davidsen T.M."/>
            <person name="DeBoy R.T."/>
            <person name="Fouts D.E."/>
            <person name="Haft D.H."/>
            <person name="Selengut J."/>
            <person name="Ren Q."/>
            <person name="Brinkac L.M."/>
            <person name="Madupu R."/>
            <person name="Kolonay J.F."/>
            <person name="Durkin S.A."/>
            <person name="Daugherty S.C."/>
            <person name="Shetty J."/>
            <person name="Shvartsbeyn A."/>
            <person name="Gebregeorgis E."/>
            <person name="Geer K."/>
            <person name="Tsegaye G."/>
            <person name="Malek J.A."/>
            <person name="Ayodeji B."/>
            <person name="Shatsman S."/>
            <person name="McLeod M.P."/>
            <person name="Smajs D."/>
            <person name="Howell J.K."/>
            <person name="Pal S."/>
            <person name="Amin A."/>
            <person name="Vashisth P."/>
            <person name="McNeill T.Z."/>
            <person name="Xiang Q."/>
            <person name="Sodergren E."/>
            <person name="Baca E."/>
            <person name="Weinstock G.M."/>
            <person name="Norris S.J."/>
            <person name="Fraser C.M."/>
            <person name="Paulsen I.T."/>
        </authorList>
    </citation>
    <scope>NUCLEOTIDE SEQUENCE [LARGE SCALE GENOMIC DNA]</scope>
    <source>
        <strain>ATCC 35405 / DSM 14222 / CIP 103919 / JCM 8153 / KCTC 15104</strain>
    </source>
</reference>
<name>PCP_TREDE</name>
<organism>
    <name type="scientific">Treponema denticola (strain ATCC 35405 / DSM 14222 / CIP 103919 / JCM 8153 / KCTC 15104)</name>
    <dbReference type="NCBI Taxonomy" id="243275"/>
    <lineage>
        <taxon>Bacteria</taxon>
        <taxon>Pseudomonadati</taxon>
        <taxon>Spirochaetota</taxon>
        <taxon>Spirochaetia</taxon>
        <taxon>Spirochaetales</taxon>
        <taxon>Treponemataceae</taxon>
        <taxon>Treponema</taxon>
    </lineage>
</organism>
<evidence type="ECO:0000255" key="1">
    <source>
        <dbReference type="HAMAP-Rule" id="MF_00417"/>
    </source>
</evidence>
<gene>
    <name evidence="1" type="primary">pcp</name>
    <name type="ordered locus">TDE_0175</name>
</gene>
<comment type="function">
    <text evidence="1">Removes 5-oxoproline from various penultimate amino acid residues except L-proline.</text>
</comment>
<comment type="catalytic activity">
    <reaction evidence="1">
        <text>Release of an N-terminal pyroglutamyl group from a polypeptide, the second amino acid generally not being Pro.</text>
        <dbReference type="EC" id="3.4.19.3"/>
    </reaction>
</comment>
<comment type="subunit">
    <text evidence="1">Homotetramer.</text>
</comment>
<comment type="subcellular location">
    <subcellularLocation>
        <location evidence="1">Cytoplasm</location>
    </subcellularLocation>
</comment>
<comment type="similarity">
    <text evidence="1">Belongs to the peptidase C15 family.</text>
</comment>
<dbReference type="EC" id="3.4.19.3" evidence="1"/>
<dbReference type="EMBL" id="AE017226">
    <property type="protein sequence ID" value="AAS10672.1"/>
    <property type="molecule type" value="Genomic_DNA"/>
</dbReference>
<dbReference type="RefSeq" id="NP_970791.1">
    <property type="nucleotide sequence ID" value="NC_002967.9"/>
</dbReference>
<dbReference type="RefSeq" id="WP_002681058.1">
    <property type="nucleotide sequence ID" value="NC_002967.9"/>
</dbReference>
<dbReference type="SMR" id="Q73RB6"/>
<dbReference type="STRING" id="243275.TDE_0175"/>
<dbReference type="MEROPS" id="C15.001"/>
<dbReference type="PaxDb" id="243275-TDE_0175"/>
<dbReference type="GeneID" id="2739348"/>
<dbReference type="KEGG" id="tde:TDE_0175"/>
<dbReference type="PATRIC" id="fig|243275.7.peg.172"/>
<dbReference type="eggNOG" id="COG2039">
    <property type="taxonomic scope" value="Bacteria"/>
</dbReference>
<dbReference type="HOGENOM" id="CLU_043960_4_0_12"/>
<dbReference type="OrthoDB" id="9779738at2"/>
<dbReference type="Proteomes" id="UP000008212">
    <property type="component" value="Chromosome"/>
</dbReference>
<dbReference type="GO" id="GO:0005829">
    <property type="term" value="C:cytosol"/>
    <property type="evidence" value="ECO:0007669"/>
    <property type="project" value="InterPro"/>
</dbReference>
<dbReference type="GO" id="GO:0016920">
    <property type="term" value="F:pyroglutamyl-peptidase activity"/>
    <property type="evidence" value="ECO:0007669"/>
    <property type="project" value="UniProtKB-UniRule"/>
</dbReference>
<dbReference type="GO" id="GO:0006508">
    <property type="term" value="P:proteolysis"/>
    <property type="evidence" value="ECO:0007669"/>
    <property type="project" value="UniProtKB-KW"/>
</dbReference>
<dbReference type="CDD" id="cd00501">
    <property type="entry name" value="Peptidase_C15"/>
    <property type="match status" value="1"/>
</dbReference>
<dbReference type="FunFam" id="3.40.630.20:FF:000001">
    <property type="entry name" value="Pyrrolidone-carboxylate peptidase"/>
    <property type="match status" value="1"/>
</dbReference>
<dbReference type="Gene3D" id="3.40.630.20">
    <property type="entry name" value="Peptidase C15, pyroglutamyl peptidase I-like"/>
    <property type="match status" value="1"/>
</dbReference>
<dbReference type="HAMAP" id="MF_00417">
    <property type="entry name" value="Pyrrolid_peptidase"/>
    <property type="match status" value="1"/>
</dbReference>
<dbReference type="InterPro" id="IPR000816">
    <property type="entry name" value="Peptidase_C15"/>
</dbReference>
<dbReference type="InterPro" id="IPR016125">
    <property type="entry name" value="Peptidase_C15-like"/>
</dbReference>
<dbReference type="InterPro" id="IPR036440">
    <property type="entry name" value="Peptidase_C15-like_sf"/>
</dbReference>
<dbReference type="InterPro" id="IPR029762">
    <property type="entry name" value="PGP-I_bact-type"/>
</dbReference>
<dbReference type="InterPro" id="IPR033694">
    <property type="entry name" value="PGPEP1_Cys_AS"/>
</dbReference>
<dbReference type="InterPro" id="IPR033693">
    <property type="entry name" value="PGPEP1_Glu_AS"/>
</dbReference>
<dbReference type="NCBIfam" id="NF009676">
    <property type="entry name" value="PRK13197.1"/>
    <property type="match status" value="1"/>
</dbReference>
<dbReference type="NCBIfam" id="TIGR00504">
    <property type="entry name" value="pyro_pdase"/>
    <property type="match status" value="1"/>
</dbReference>
<dbReference type="PANTHER" id="PTHR23402">
    <property type="entry name" value="PROTEASE FAMILY C15 PYROGLUTAMYL-PEPTIDASE I-RELATED"/>
    <property type="match status" value="1"/>
</dbReference>
<dbReference type="PANTHER" id="PTHR23402:SF1">
    <property type="entry name" value="PYROGLUTAMYL-PEPTIDASE I"/>
    <property type="match status" value="1"/>
</dbReference>
<dbReference type="Pfam" id="PF01470">
    <property type="entry name" value="Peptidase_C15"/>
    <property type="match status" value="1"/>
</dbReference>
<dbReference type="PIRSF" id="PIRSF015592">
    <property type="entry name" value="Prld-crbxl_pptds"/>
    <property type="match status" value="1"/>
</dbReference>
<dbReference type="PRINTS" id="PR00706">
    <property type="entry name" value="PYROGLUPTASE"/>
</dbReference>
<dbReference type="SUPFAM" id="SSF53182">
    <property type="entry name" value="Pyrrolidone carboxyl peptidase (pyroglutamate aminopeptidase)"/>
    <property type="match status" value="1"/>
</dbReference>
<dbReference type="PROSITE" id="PS01334">
    <property type="entry name" value="PYRASE_CYS"/>
    <property type="match status" value="1"/>
</dbReference>
<dbReference type="PROSITE" id="PS01333">
    <property type="entry name" value="PYRASE_GLU"/>
    <property type="match status" value="1"/>
</dbReference>
<protein>
    <recommendedName>
        <fullName evidence="1">Pyrrolidone-carboxylate peptidase</fullName>
        <ecNumber evidence="1">3.4.19.3</ecNumber>
    </recommendedName>
    <alternativeName>
        <fullName evidence="1">5-oxoprolyl-peptidase</fullName>
    </alternativeName>
    <alternativeName>
        <fullName evidence="1">Pyroglutamyl-peptidase I</fullName>
        <shortName evidence="1">PGP-I</shortName>
        <shortName evidence="1">Pyrase</shortName>
    </alternativeName>
</protein>
<accession>Q73RB6</accession>
<keyword id="KW-0963">Cytoplasm</keyword>
<keyword id="KW-0378">Hydrolase</keyword>
<keyword id="KW-0645">Protease</keyword>
<keyword id="KW-1185">Reference proteome</keyword>
<keyword id="KW-0788">Thiol protease</keyword>
<feature type="chain" id="PRO_0000184748" description="Pyrrolidone-carboxylate peptidase">
    <location>
        <begin position="1"/>
        <end position="217"/>
    </location>
</feature>
<feature type="active site" evidence="1">
    <location>
        <position position="78"/>
    </location>
</feature>
<feature type="active site" evidence="1">
    <location>
        <position position="141"/>
    </location>
</feature>
<feature type="active site" evidence="1">
    <location>
        <position position="168"/>
    </location>
</feature>